<keyword id="KW-0067">ATP-binding</keyword>
<keyword id="KW-0436">Ligase</keyword>
<keyword id="KW-0479">Metal-binding</keyword>
<keyword id="KW-0547">Nucleotide-binding</keyword>
<keyword id="KW-0671">Queuosine biosynthesis</keyword>
<keyword id="KW-0862">Zinc</keyword>
<sequence length="229" mass="25266">MSKAVVVFSGGQDSTTCLIQALQQFDEVHGITFDYGQRHREEIEIAKELATNLKLASHKVMDVTLLNELAISALTRDSIPVSNELMDNGLPNTFVPGRNILFLTLAGIYAYQLGADTVITGVCETDFSGYPDCRNDFVKAMQAALEQGMDKKLTIQTPLMWLDKAETWALADKFDSLELVRNETLTCYNGIKGDGCGTCPACLLRKRGLEEYLADKEAIQARLSAKCEN</sequence>
<organism>
    <name type="scientific">Shewanella halifaxensis (strain HAW-EB4)</name>
    <dbReference type="NCBI Taxonomy" id="458817"/>
    <lineage>
        <taxon>Bacteria</taxon>
        <taxon>Pseudomonadati</taxon>
        <taxon>Pseudomonadota</taxon>
        <taxon>Gammaproteobacteria</taxon>
        <taxon>Alteromonadales</taxon>
        <taxon>Shewanellaceae</taxon>
        <taxon>Shewanella</taxon>
    </lineage>
</organism>
<feature type="chain" id="PRO_1000088163" description="7-cyano-7-deazaguanine synthase">
    <location>
        <begin position="1"/>
        <end position="229"/>
    </location>
</feature>
<feature type="binding site" evidence="1">
    <location>
        <begin position="8"/>
        <end position="18"/>
    </location>
    <ligand>
        <name>ATP</name>
        <dbReference type="ChEBI" id="CHEBI:30616"/>
    </ligand>
</feature>
<feature type="binding site" evidence="1">
    <location>
        <position position="187"/>
    </location>
    <ligand>
        <name>Zn(2+)</name>
        <dbReference type="ChEBI" id="CHEBI:29105"/>
    </ligand>
</feature>
<feature type="binding site" evidence="1">
    <location>
        <position position="196"/>
    </location>
    <ligand>
        <name>Zn(2+)</name>
        <dbReference type="ChEBI" id="CHEBI:29105"/>
    </ligand>
</feature>
<feature type="binding site" evidence="1">
    <location>
        <position position="199"/>
    </location>
    <ligand>
        <name>Zn(2+)</name>
        <dbReference type="ChEBI" id="CHEBI:29105"/>
    </ligand>
</feature>
<feature type="binding site" evidence="1">
    <location>
        <position position="202"/>
    </location>
    <ligand>
        <name>Zn(2+)</name>
        <dbReference type="ChEBI" id="CHEBI:29105"/>
    </ligand>
</feature>
<dbReference type="EC" id="6.3.4.20" evidence="1"/>
<dbReference type="EMBL" id="CP000931">
    <property type="protein sequence ID" value="ABZ76500.1"/>
    <property type="molecule type" value="Genomic_DNA"/>
</dbReference>
<dbReference type="RefSeq" id="WP_012277032.1">
    <property type="nucleotide sequence ID" value="NC_010334.1"/>
</dbReference>
<dbReference type="SMR" id="B0TSC0"/>
<dbReference type="STRING" id="458817.Shal_1935"/>
<dbReference type="KEGG" id="shl:Shal_1935"/>
<dbReference type="eggNOG" id="COG0603">
    <property type="taxonomic scope" value="Bacteria"/>
</dbReference>
<dbReference type="HOGENOM" id="CLU_081854_0_0_6"/>
<dbReference type="OrthoDB" id="9789567at2"/>
<dbReference type="UniPathway" id="UPA00391"/>
<dbReference type="Proteomes" id="UP000001317">
    <property type="component" value="Chromosome"/>
</dbReference>
<dbReference type="GO" id="GO:0005524">
    <property type="term" value="F:ATP binding"/>
    <property type="evidence" value="ECO:0007669"/>
    <property type="project" value="UniProtKB-UniRule"/>
</dbReference>
<dbReference type="GO" id="GO:0016879">
    <property type="term" value="F:ligase activity, forming carbon-nitrogen bonds"/>
    <property type="evidence" value="ECO:0007669"/>
    <property type="project" value="UniProtKB-UniRule"/>
</dbReference>
<dbReference type="GO" id="GO:0008270">
    <property type="term" value="F:zinc ion binding"/>
    <property type="evidence" value="ECO:0007669"/>
    <property type="project" value="UniProtKB-UniRule"/>
</dbReference>
<dbReference type="GO" id="GO:0008616">
    <property type="term" value="P:queuosine biosynthetic process"/>
    <property type="evidence" value="ECO:0007669"/>
    <property type="project" value="UniProtKB-UniRule"/>
</dbReference>
<dbReference type="CDD" id="cd01995">
    <property type="entry name" value="QueC-like"/>
    <property type="match status" value="1"/>
</dbReference>
<dbReference type="FunFam" id="3.40.50.620:FF:000017">
    <property type="entry name" value="7-cyano-7-deazaguanine synthase"/>
    <property type="match status" value="1"/>
</dbReference>
<dbReference type="Gene3D" id="3.40.50.620">
    <property type="entry name" value="HUPs"/>
    <property type="match status" value="1"/>
</dbReference>
<dbReference type="HAMAP" id="MF_01633">
    <property type="entry name" value="QueC"/>
    <property type="match status" value="1"/>
</dbReference>
<dbReference type="InterPro" id="IPR018317">
    <property type="entry name" value="QueC"/>
</dbReference>
<dbReference type="InterPro" id="IPR014729">
    <property type="entry name" value="Rossmann-like_a/b/a_fold"/>
</dbReference>
<dbReference type="NCBIfam" id="TIGR00364">
    <property type="entry name" value="7-cyano-7-deazaguanine synthase QueC"/>
    <property type="match status" value="1"/>
</dbReference>
<dbReference type="NCBIfam" id="NF008317">
    <property type="entry name" value="PRK11106.1"/>
    <property type="match status" value="1"/>
</dbReference>
<dbReference type="PANTHER" id="PTHR42914">
    <property type="entry name" value="7-CYANO-7-DEAZAGUANINE SYNTHASE"/>
    <property type="match status" value="1"/>
</dbReference>
<dbReference type="PANTHER" id="PTHR42914:SF1">
    <property type="entry name" value="7-CYANO-7-DEAZAGUANINE SYNTHASE"/>
    <property type="match status" value="1"/>
</dbReference>
<dbReference type="Pfam" id="PF06508">
    <property type="entry name" value="QueC"/>
    <property type="match status" value="1"/>
</dbReference>
<dbReference type="PIRSF" id="PIRSF006293">
    <property type="entry name" value="ExsB"/>
    <property type="match status" value="1"/>
</dbReference>
<dbReference type="SUPFAM" id="SSF52402">
    <property type="entry name" value="Adenine nucleotide alpha hydrolases-like"/>
    <property type="match status" value="1"/>
</dbReference>
<protein>
    <recommendedName>
        <fullName evidence="1">7-cyano-7-deazaguanine synthase</fullName>
        <ecNumber evidence="1">6.3.4.20</ecNumber>
    </recommendedName>
    <alternativeName>
        <fullName evidence="1">7-cyano-7-carbaguanine synthase</fullName>
    </alternativeName>
    <alternativeName>
        <fullName evidence="1">PreQ(0) synthase</fullName>
    </alternativeName>
    <alternativeName>
        <fullName evidence="1">Queuosine biosynthesis protein QueC</fullName>
    </alternativeName>
</protein>
<evidence type="ECO:0000255" key="1">
    <source>
        <dbReference type="HAMAP-Rule" id="MF_01633"/>
    </source>
</evidence>
<gene>
    <name evidence="1" type="primary">queC</name>
    <name type="ordered locus">Shal_1935</name>
</gene>
<proteinExistence type="inferred from homology"/>
<name>QUEC_SHEHH</name>
<accession>B0TSC0</accession>
<reference key="1">
    <citation type="submission" date="2008-01" db="EMBL/GenBank/DDBJ databases">
        <title>Complete sequence of Shewanella halifaxensis HAW-EB4.</title>
        <authorList>
            <consortium name="US DOE Joint Genome Institute"/>
            <person name="Copeland A."/>
            <person name="Lucas S."/>
            <person name="Lapidus A."/>
            <person name="Glavina del Rio T."/>
            <person name="Dalin E."/>
            <person name="Tice H."/>
            <person name="Bruce D."/>
            <person name="Goodwin L."/>
            <person name="Pitluck S."/>
            <person name="Sims D."/>
            <person name="Brettin T."/>
            <person name="Detter J.C."/>
            <person name="Han C."/>
            <person name="Kuske C.R."/>
            <person name="Schmutz J."/>
            <person name="Larimer F."/>
            <person name="Land M."/>
            <person name="Hauser L."/>
            <person name="Kyrpides N."/>
            <person name="Kim E."/>
            <person name="Zhao J.-S."/>
            <person name="Richardson P."/>
        </authorList>
    </citation>
    <scope>NUCLEOTIDE SEQUENCE [LARGE SCALE GENOMIC DNA]</scope>
    <source>
        <strain>HAW-EB4</strain>
    </source>
</reference>
<comment type="function">
    <text evidence="1">Catalyzes the ATP-dependent conversion of 7-carboxy-7-deazaguanine (CDG) to 7-cyano-7-deazaguanine (preQ(0)).</text>
</comment>
<comment type="catalytic activity">
    <reaction evidence="1">
        <text>7-carboxy-7-deazaguanine + NH4(+) + ATP = 7-cyano-7-deazaguanine + ADP + phosphate + H2O + H(+)</text>
        <dbReference type="Rhea" id="RHEA:27982"/>
        <dbReference type="ChEBI" id="CHEBI:15377"/>
        <dbReference type="ChEBI" id="CHEBI:15378"/>
        <dbReference type="ChEBI" id="CHEBI:28938"/>
        <dbReference type="ChEBI" id="CHEBI:30616"/>
        <dbReference type="ChEBI" id="CHEBI:43474"/>
        <dbReference type="ChEBI" id="CHEBI:45075"/>
        <dbReference type="ChEBI" id="CHEBI:61036"/>
        <dbReference type="ChEBI" id="CHEBI:456216"/>
        <dbReference type="EC" id="6.3.4.20"/>
    </reaction>
</comment>
<comment type="cofactor">
    <cofactor evidence="1">
        <name>Zn(2+)</name>
        <dbReference type="ChEBI" id="CHEBI:29105"/>
    </cofactor>
    <text evidence="1">Binds 1 zinc ion per subunit.</text>
</comment>
<comment type="pathway">
    <text evidence="1">Purine metabolism; 7-cyano-7-deazaguanine biosynthesis.</text>
</comment>
<comment type="similarity">
    <text evidence="1">Belongs to the QueC family.</text>
</comment>